<comment type="function">
    <text evidence="1">Binds directly to 23S ribosomal RNA and is necessary for the in vitro assembly process of the 50S ribosomal subunit. It is not involved in the protein synthesizing functions of that subunit.</text>
</comment>
<comment type="similarity">
    <text evidence="1">Belongs to the bacterial ribosomal protein bL20 family.</text>
</comment>
<organism>
    <name type="scientific">Macrococcus caseolyticus (strain JCSC5402)</name>
    <name type="common">Macrococcoides caseolyticum</name>
    <dbReference type="NCBI Taxonomy" id="458233"/>
    <lineage>
        <taxon>Bacteria</taxon>
        <taxon>Bacillati</taxon>
        <taxon>Bacillota</taxon>
        <taxon>Bacilli</taxon>
        <taxon>Bacillales</taxon>
        <taxon>Staphylococcaceae</taxon>
        <taxon>Macrococcoides</taxon>
    </lineage>
</organism>
<accession>B9E782</accession>
<reference key="1">
    <citation type="journal article" date="2009" name="J. Bacteriol.">
        <title>Complete genome sequence of Macrococcus caseolyticus strain JCSCS5402, reflecting the ancestral genome of the human-pathogenic staphylococci.</title>
        <authorList>
            <person name="Baba T."/>
            <person name="Kuwahara-Arai K."/>
            <person name="Uchiyama I."/>
            <person name="Takeuchi F."/>
            <person name="Ito T."/>
            <person name="Hiramatsu K."/>
        </authorList>
    </citation>
    <scope>NUCLEOTIDE SEQUENCE [LARGE SCALE GENOMIC DNA]</scope>
    <source>
        <strain>JCSC5402</strain>
    </source>
</reference>
<gene>
    <name evidence="1" type="primary">rplT</name>
    <name type="ordered locus">MCCL_1343</name>
</gene>
<feature type="chain" id="PRO_1000193965" description="Large ribosomal subunit protein bL20">
    <location>
        <begin position="1"/>
        <end position="118"/>
    </location>
</feature>
<protein>
    <recommendedName>
        <fullName evidence="1">Large ribosomal subunit protein bL20</fullName>
    </recommendedName>
    <alternativeName>
        <fullName evidence="2">50S ribosomal protein L20</fullName>
    </alternativeName>
</protein>
<dbReference type="EMBL" id="AP009484">
    <property type="protein sequence ID" value="BAH18050.1"/>
    <property type="molecule type" value="Genomic_DNA"/>
</dbReference>
<dbReference type="RefSeq" id="WP_012657248.1">
    <property type="nucleotide sequence ID" value="NC_011999.1"/>
</dbReference>
<dbReference type="SMR" id="B9E782"/>
<dbReference type="STRING" id="458233.MCCL_1343"/>
<dbReference type="GeneID" id="61128754"/>
<dbReference type="KEGG" id="mcl:MCCL_1343"/>
<dbReference type="eggNOG" id="COG0292">
    <property type="taxonomic scope" value="Bacteria"/>
</dbReference>
<dbReference type="HOGENOM" id="CLU_123265_0_1_9"/>
<dbReference type="OrthoDB" id="9808966at2"/>
<dbReference type="Proteomes" id="UP000001383">
    <property type="component" value="Chromosome"/>
</dbReference>
<dbReference type="GO" id="GO:1990904">
    <property type="term" value="C:ribonucleoprotein complex"/>
    <property type="evidence" value="ECO:0007669"/>
    <property type="project" value="UniProtKB-KW"/>
</dbReference>
<dbReference type="GO" id="GO:0005840">
    <property type="term" value="C:ribosome"/>
    <property type="evidence" value="ECO:0007669"/>
    <property type="project" value="UniProtKB-KW"/>
</dbReference>
<dbReference type="GO" id="GO:0019843">
    <property type="term" value="F:rRNA binding"/>
    <property type="evidence" value="ECO:0007669"/>
    <property type="project" value="UniProtKB-UniRule"/>
</dbReference>
<dbReference type="GO" id="GO:0003735">
    <property type="term" value="F:structural constituent of ribosome"/>
    <property type="evidence" value="ECO:0007669"/>
    <property type="project" value="InterPro"/>
</dbReference>
<dbReference type="GO" id="GO:0000027">
    <property type="term" value="P:ribosomal large subunit assembly"/>
    <property type="evidence" value="ECO:0007669"/>
    <property type="project" value="UniProtKB-UniRule"/>
</dbReference>
<dbReference type="GO" id="GO:0006412">
    <property type="term" value="P:translation"/>
    <property type="evidence" value="ECO:0007669"/>
    <property type="project" value="InterPro"/>
</dbReference>
<dbReference type="CDD" id="cd07026">
    <property type="entry name" value="Ribosomal_L20"/>
    <property type="match status" value="1"/>
</dbReference>
<dbReference type="FunFam" id="1.10.1900.20:FF:000001">
    <property type="entry name" value="50S ribosomal protein L20"/>
    <property type="match status" value="1"/>
</dbReference>
<dbReference type="Gene3D" id="6.10.160.10">
    <property type="match status" value="1"/>
</dbReference>
<dbReference type="Gene3D" id="1.10.1900.20">
    <property type="entry name" value="Ribosomal protein L20"/>
    <property type="match status" value="1"/>
</dbReference>
<dbReference type="HAMAP" id="MF_00382">
    <property type="entry name" value="Ribosomal_bL20"/>
    <property type="match status" value="1"/>
</dbReference>
<dbReference type="InterPro" id="IPR005813">
    <property type="entry name" value="Ribosomal_bL20"/>
</dbReference>
<dbReference type="InterPro" id="IPR049946">
    <property type="entry name" value="RIBOSOMAL_L20_CS"/>
</dbReference>
<dbReference type="InterPro" id="IPR035566">
    <property type="entry name" value="Ribosomal_protein_bL20_C"/>
</dbReference>
<dbReference type="NCBIfam" id="TIGR01032">
    <property type="entry name" value="rplT_bact"/>
    <property type="match status" value="1"/>
</dbReference>
<dbReference type="PANTHER" id="PTHR10986">
    <property type="entry name" value="39S RIBOSOMAL PROTEIN L20"/>
    <property type="match status" value="1"/>
</dbReference>
<dbReference type="Pfam" id="PF00453">
    <property type="entry name" value="Ribosomal_L20"/>
    <property type="match status" value="1"/>
</dbReference>
<dbReference type="PRINTS" id="PR00062">
    <property type="entry name" value="RIBOSOMALL20"/>
</dbReference>
<dbReference type="SUPFAM" id="SSF74731">
    <property type="entry name" value="Ribosomal protein L20"/>
    <property type="match status" value="1"/>
</dbReference>
<dbReference type="PROSITE" id="PS00937">
    <property type="entry name" value="RIBOSOMAL_L20"/>
    <property type="match status" value="1"/>
</dbReference>
<proteinExistence type="inferred from homology"/>
<keyword id="KW-1185">Reference proteome</keyword>
<keyword id="KW-0687">Ribonucleoprotein</keyword>
<keyword id="KW-0689">Ribosomal protein</keyword>
<keyword id="KW-0694">RNA-binding</keyword>
<keyword id="KW-0699">rRNA-binding</keyword>
<name>RL20_MACCJ</name>
<evidence type="ECO:0000255" key="1">
    <source>
        <dbReference type="HAMAP-Rule" id="MF_00382"/>
    </source>
</evidence>
<evidence type="ECO:0000305" key="2"/>
<sequence length="118" mass="13553">MPRVKGGTVTRARRKKTIKLAKGYFGSKHTLYKVAKQQVMKSGQYAYRDRRQKKREFRKLWIARINAAARQHDISYSRLMNGLKVAGIDVNRKMLSEIAISDEKAFAELVNQAKAALK</sequence>